<accession>Q8D3J6</accession>
<comment type="function">
    <text evidence="1">F(1)F(0) ATP synthase produces ATP from ADP in the presence of a proton or sodium gradient. F-type ATPases consist of two structural domains, F(1) containing the extramembraneous catalytic core and F(0) containing the membrane proton channel, linked together by a central stalk and a peripheral stalk. During catalysis, ATP synthesis in the catalytic domain of F(1) is coupled via a rotary mechanism of the central stalk subunits to proton translocation.</text>
</comment>
<comment type="function">
    <text evidence="1">This protein is part of the stalk that links CF(0) to CF(1). It either transmits conformational changes from CF(0) to CF(1) or is implicated in proton conduction.</text>
</comment>
<comment type="subunit">
    <text evidence="1">F-type ATPases have 2 components, F(1) - the catalytic core - and F(0) - the membrane proton channel. F(1) has five subunits: alpha(3), beta(3), gamma(1), delta(1), epsilon(1). F(0) has three main subunits: a(1), b(2) and c(10-14). The alpha and beta chains form an alternating ring which encloses part of the gamma chain. F(1) is attached to F(0) by a central stalk formed by the gamma and epsilon chains, while a peripheral stalk is formed by the delta and b chains.</text>
</comment>
<comment type="subcellular location">
    <subcellularLocation>
        <location evidence="1">Cell membrane</location>
        <topology evidence="1">Peripheral membrane protein</topology>
    </subcellularLocation>
</comment>
<comment type="similarity">
    <text evidence="1">Belongs to the ATPase delta chain family.</text>
</comment>
<organism>
    <name type="scientific">Wigglesworthia glossinidia brevipalpis</name>
    <dbReference type="NCBI Taxonomy" id="36870"/>
    <lineage>
        <taxon>Bacteria</taxon>
        <taxon>Pseudomonadati</taxon>
        <taxon>Pseudomonadota</taxon>
        <taxon>Gammaproteobacteria</taxon>
        <taxon>Enterobacterales</taxon>
        <taxon>Erwiniaceae</taxon>
        <taxon>Wigglesworthia</taxon>
    </lineage>
</organism>
<evidence type="ECO:0000255" key="1">
    <source>
        <dbReference type="HAMAP-Rule" id="MF_01416"/>
    </source>
</evidence>
<name>ATPD_WIGBR</name>
<protein>
    <recommendedName>
        <fullName evidence="1">ATP synthase subunit delta</fullName>
    </recommendedName>
    <alternativeName>
        <fullName evidence="1">ATP synthase F(1) sector subunit delta</fullName>
    </alternativeName>
    <alternativeName>
        <fullName evidence="1">F-type ATPase subunit delta</fullName>
        <shortName evidence="1">F-ATPase subunit delta</shortName>
    </alternativeName>
</protein>
<dbReference type="EMBL" id="BA000021">
    <property type="protein sequence ID" value="BAC24151.1"/>
    <property type="molecule type" value="Genomic_DNA"/>
</dbReference>
<dbReference type="SMR" id="Q8D3J6"/>
<dbReference type="STRING" id="36870.gene:10368483"/>
<dbReference type="KEGG" id="wbr:atpH"/>
<dbReference type="eggNOG" id="COG0712">
    <property type="taxonomic scope" value="Bacteria"/>
</dbReference>
<dbReference type="HOGENOM" id="CLU_085114_3_0_6"/>
<dbReference type="Proteomes" id="UP000000562">
    <property type="component" value="Chromosome"/>
</dbReference>
<dbReference type="GO" id="GO:0005886">
    <property type="term" value="C:plasma membrane"/>
    <property type="evidence" value="ECO:0007669"/>
    <property type="project" value="UniProtKB-SubCell"/>
</dbReference>
<dbReference type="GO" id="GO:0045259">
    <property type="term" value="C:proton-transporting ATP synthase complex"/>
    <property type="evidence" value="ECO:0007669"/>
    <property type="project" value="UniProtKB-KW"/>
</dbReference>
<dbReference type="GO" id="GO:0046933">
    <property type="term" value="F:proton-transporting ATP synthase activity, rotational mechanism"/>
    <property type="evidence" value="ECO:0007669"/>
    <property type="project" value="UniProtKB-UniRule"/>
</dbReference>
<dbReference type="Gene3D" id="1.10.520.20">
    <property type="entry name" value="N-terminal domain of the delta subunit of the F1F0-ATP synthase"/>
    <property type="match status" value="1"/>
</dbReference>
<dbReference type="HAMAP" id="MF_01416">
    <property type="entry name" value="ATP_synth_delta_bact"/>
    <property type="match status" value="1"/>
</dbReference>
<dbReference type="InterPro" id="IPR026015">
    <property type="entry name" value="ATP_synth_OSCP/delta_N_sf"/>
</dbReference>
<dbReference type="InterPro" id="IPR000711">
    <property type="entry name" value="ATPase_OSCP/dsu"/>
</dbReference>
<dbReference type="NCBIfam" id="TIGR01145">
    <property type="entry name" value="ATP_synt_delta"/>
    <property type="match status" value="1"/>
</dbReference>
<dbReference type="NCBIfam" id="NF004402">
    <property type="entry name" value="PRK05758.2-2"/>
    <property type="match status" value="1"/>
</dbReference>
<dbReference type="PANTHER" id="PTHR11910">
    <property type="entry name" value="ATP SYNTHASE DELTA CHAIN"/>
    <property type="match status" value="1"/>
</dbReference>
<dbReference type="Pfam" id="PF00213">
    <property type="entry name" value="OSCP"/>
    <property type="match status" value="1"/>
</dbReference>
<dbReference type="PRINTS" id="PR00125">
    <property type="entry name" value="ATPASEDELTA"/>
</dbReference>
<dbReference type="SUPFAM" id="SSF47928">
    <property type="entry name" value="N-terminal domain of the delta subunit of the F1F0-ATP synthase"/>
    <property type="match status" value="1"/>
</dbReference>
<keyword id="KW-0066">ATP synthesis</keyword>
<keyword id="KW-1003">Cell membrane</keyword>
<keyword id="KW-0139">CF(1)</keyword>
<keyword id="KW-0375">Hydrogen ion transport</keyword>
<keyword id="KW-0406">Ion transport</keyword>
<keyword id="KW-0472">Membrane</keyword>
<keyword id="KW-1185">Reference proteome</keyword>
<keyword id="KW-0813">Transport</keyword>
<gene>
    <name evidence="1" type="primary">atpH</name>
    <name type="ordered locus">WIGBR0050</name>
</gene>
<reference key="1">
    <citation type="journal article" date="2002" name="Nat. Genet.">
        <title>Genome sequence of the endocellular obligate symbiont of tsetse flies, Wigglesworthia glossinidia.</title>
        <authorList>
            <person name="Akman L."/>
            <person name="Yamashita A."/>
            <person name="Watanabe H."/>
            <person name="Oshima K."/>
            <person name="Shiba T."/>
            <person name="Hattori M."/>
            <person name="Aksoy S."/>
        </authorList>
    </citation>
    <scope>NUCLEOTIDE SEQUENCE [LARGE SCALE GENOMIC DNA]</scope>
</reference>
<sequence>MTIYEIKSYLSRPYAEAAFKFANENNIVDDWIYMIEEICKILKNIKIYSLSSFILKKNKNFLFESIKNNFDVYFNNFVKIIIENNRLIIFPEILNQFINLKNDQNNIENITIISKYKLDKKILNKIEKKIKSLIFKEIKINIKIDKSIIGGYIIKSKNFLIDNSIKNKLYRFSEYL</sequence>
<feature type="chain" id="PRO_0000382172" description="ATP synthase subunit delta">
    <location>
        <begin position="1"/>
        <end position="176"/>
    </location>
</feature>
<proteinExistence type="inferred from homology"/>